<name>DNAJ_ALISL</name>
<keyword id="KW-0143">Chaperone</keyword>
<keyword id="KW-0963">Cytoplasm</keyword>
<keyword id="KW-0235">DNA replication</keyword>
<keyword id="KW-0479">Metal-binding</keyword>
<keyword id="KW-0677">Repeat</keyword>
<keyword id="KW-0346">Stress response</keyword>
<keyword id="KW-0862">Zinc</keyword>
<keyword id="KW-0863">Zinc-finger</keyword>
<feature type="chain" id="PRO_1000137656" description="Chaperone protein DnaJ">
    <location>
        <begin position="1"/>
        <end position="380"/>
    </location>
</feature>
<feature type="domain" description="J" evidence="1">
    <location>
        <begin position="5"/>
        <end position="70"/>
    </location>
</feature>
<feature type="repeat" description="CXXCXGXG motif">
    <location>
        <begin position="148"/>
        <end position="155"/>
    </location>
</feature>
<feature type="repeat" description="CXXCXGXG motif">
    <location>
        <begin position="165"/>
        <end position="172"/>
    </location>
</feature>
<feature type="repeat" description="CXXCXGXG motif">
    <location>
        <begin position="187"/>
        <end position="194"/>
    </location>
</feature>
<feature type="repeat" description="CXXCXGXG motif">
    <location>
        <begin position="201"/>
        <end position="208"/>
    </location>
</feature>
<feature type="zinc finger region" description="CR-type" evidence="1">
    <location>
        <begin position="135"/>
        <end position="213"/>
    </location>
</feature>
<feature type="binding site" evidence="1">
    <location>
        <position position="148"/>
    </location>
    <ligand>
        <name>Zn(2+)</name>
        <dbReference type="ChEBI" id="CHEBI:29105"/>
        <label>1</label>
    </ligand>
</feature>
<feature type="binding site" evidence="1">
    <location>
        <position position="151"/>
    </location>
    <ligand>
        <name>Zn(2+)</name>
        <dbReference type="ChEBI" id="CHEBI:29105"/>
        <label>1</label>
    </ligand>
</feature>
<feature type="binding site" evidence="1">
    <location>
        <position position="165"/>
    </location>
    <ligand>
        <name>Zn(2+)</name>
        <dbReference type="ChEBI" id="CHEBI:29105"/>
        <label>2</label>
    </ligand>
</feature>
<feature type="binding site" evidence="1">
    <location>
        <position position="168"/>
    </location>
    <ligand>
        <name>Zn(2+)</name>
        <dbReference type="ChEBI" id="CHEBI:29105"/>
        <label>2</label>
    </ligand>
</feature>
<feature type="binding site" evidence="1">
    <location>
        <position position="187"/>
    </location>
    <ligand>
        <name>Zn(2+)</name>
        <dbReference type="ChEBI" id="CHEBI:29105"/>
        <label>2</label>
    </ligand>
</feature>
<feature type="binding site" evidence="1">
    <location>
        <position position="190"/>
    </location>
    <ligand>
        <name>Zn(2+)</name>
        <dbReference type="ChEBI" id="CHEBI:29105"/>
        <label>2</label>
    </ligand>
</feature>
<feature type="binding site" evidence="1">
    <location>
        <position position="201"/>
    </location>
    <ligand>
        <name>Zn(2+)</name>
        <dbReference type="ChEBI" id="CHEBI:29105"/>
        <label>1</label>
    </ligand>
</feature>
<feature type="binding site" evidence="1">
    <location>
        <position position="204"/>
    </location>
    <ligand>
        <name>Zn(2+)</name>
        <dbReference type="ChEBI" id="CHEBI:29105"/>
        <label>1</label>
    </ligand>
</feature>
<proteinExistence type="inferred from homology"/>
<organism>
    <name type="scientific">Aliivibrio salmonicida (strain LFI1238)</name>
    <name type="common">Vibrio salmonicida (strain LFI1238)</name>
    <dbReference type="NCBI Taxonomy" id="316275"/>
    <lineage>
        <taxon>Bacteria</taxon>
        <taxon>Pseudomonadati</taxon>
        <taxon>Pseudomonadota</taxon>
        <taxon>Gammaproteobacteria</taxon>
        <taxon>Vibrionales</taxon>
        <taxon>Vibrionaceae</taxon>
        <taxon>Aliivibrio</taxon>
    </lineage>
</organism>
<evidence type="ECO:0000255" key="1">
    <source>
        <dbReference type="HAMAP-Rule" id="MF_01152"/>
    </source>
</evidence>
<accession>B6EKA0</accession>
<comment type="function">
    <text evidence="1">Participates actively in the response to hyperosmotic and heat shock by preventing the aggregation of stress-denatured proteins and by disaggregating proteins, also in an autonomous, DnaK-independent fashion. Unfolded proteins bind initially to DnaJ; upon interaction with the DnaJ-bound protein, DnaK hydrolyzes its bound ATP, resulting in the formation of a stable complex. GrpE releases ADP from DnaK; ATP binding to DnaK triggers the release of the substrate protein, thus completing the reaction cycle. Several rounds of ATP-dependent interactions between DnaJ, DnaK and GrpE are required for fully efficient folding. Also involved, together with DnaK and GrpE, in the DNA replication of plasmids through activation of initiation proteins.</text>
</comment>
<comment type="cofactor">
    <cofactor evidence="1">
        <name>Zn(2+)</name>
        <dbReference type="ChEBI" id="CHEBI:29105"/>
    </cofactor>
    <text evidence="1">Binds 2 Zn(2+) ions per monomer.</text>
</comment>
<comment type="subunit">
    <text evidence="1">Homodimer.</text>
</comment>
<comment type="subcellular location">
    <subcellularLocation>
        <location evidence="1">Cytoplasm</location>
    </subcellularLocation>
</comment>
<comment type="domain">
    <text evidence="1">The J domain is necessary and sufficient to stimulate DnaK ATPase activity. Zinc center 1 plays an important role in the autonomous, DnaK-independent chaperone activity of DnaJ. Zinc center 2 is essential for interaction with DnaK and for DnaJ activity.</text>
</comment>
<comment type="similarity">
    <text evidence="1">Belongs to the DnaJ family.</text>
</comment>
<sequence>MSKRDFYEVLGVSRDASERDIKKAYKRLAMKFHPDRNQGDETAPEKFKEVKVAYEILTDAQKRAAYDQYGHAAFEQGGMGGGGGFGGGQGDFGDIFGDVFGDIFGGGRRGGQQRAQRGSDLRYNMELTLEEAVRGCEKDIEIPTLAACEPCDGTGAKKGTSSTTCSTCHGQGQVQMRQGFFAVQQACPTCHGKGKIIKDPCNSCHGDGRVQKTKTLNVKIPSGVDTGDRIRLSGEGEAGEHGAPAGDLYVQVHVKEHNIFDRDGNNLYCEVPVSFTMAALGGEVEVPTLDGRVSLKVPLETQTGRMFRMRGKGVKGVRTHSAGDLIVKLIVETPVKLTKRQRELLKEFQESFDGKDAKKHNPKSEGFLSGVKNFFDDLTK</sequence>
<protein>
    <recommendedName>
        <fullName evidence="1">Chaperone protein DnaJ</fullName>
    </recommendedName>
</protein>
<dbReference type="EMBL" id="FM178379">
    <property type="protein sequence ID" value="CAQ80154.1"/>
    <property type="molecule type" value="Genomic_DNA"/>
</dbReference>
<dbReference type="RefSeq" id="WP_012550949.1">
    <property type="nucleotide sequence ID" value="NC_011312.1"/>
</dbReference>
<dbReference type="SMR" id="B6EKA0"/>
<dbReference type="KEGG" id="vsa:VSAL_I2470"/>
<dbReference type="eggNOG" id="COG0484">
    <property type="taxonomic scope" value="Bacteria"/>
</dbReference>
<dbReference type="HOGENOM" id="CLU_017633_0_7_6"/>
<dbReference type="Proteomes" id="UP000001730">
    <property type="component" value="Chromosome 1"/>
</dbReference>
<dbReference type="GO" id="GO:0005737">
    <property type="term" value="C:cytoplasm"/>
    <property type="evidence" value="ECO:0007669"/>
    <property type="project" value="UniProtKB-SubCell"/>
</dbReference>
<dbReference type="GO" id="GO:0005524">
    <property type="term" value="F:ATP binding"/>
    <property type="evidence" value="ECO:0007669"/>
    <property type="project" value="InterPro"/>
</dbReference>
<dbReference type="GO" id="GO:0031072">
    <property type="term" value="F:heat shock protein binding"/>
    <property type="evidence" value="ECO:0007669"/>
    <property type="project" value="InterPro"/>
</dbReference>
<dbReference type="GO" id="GO:0051082">
    <property type="term" value="F:unfolded protein binding"/>
    <property type="evidence" value="ECO:0007669"/>
    <property type="project" value="UniProtKB-UniRule"/>
</dbReference>
<dbReference type="GO" id="GO:0008270">
    <property type="term" value="F:zinc ion binding"/>
    <property type="evidence" value="ECO:0007669"/>
    <property type="project" value="UniProtKB-UniRule"/>
</dbReference>
<dbReference type="GO" id="GO:0051085">
    <property type="term" value="P:chaperone cofactor-dependent protein refolding"/>
    <property type="evidence" value="ECO:0007669"/>
    <property type="project" value="TreeGrafter"/>
</dbReference>
<dbReference type="GO" id="GO:0006260">
    <property type="term" value="P:DNA replication"/>
    <property type="evidence" value="ECO:0007669"/>
    <property type="project" value="UniProtKB-KW"/>
</dbReference>
<dbReference type="GO" id="GO:0042026">
    <property type="term" value="P:protein refolding"/>
    <property type="evidence" value="ECO:0007669"/>
    <property type="project" value="TreeGrafter"/>
</dbReference>
<dbReference type="GO" id="GO:0009408">
    <property type="term" value="P:response to heat"/>
    <property type="evidence" value="ECO:0007669"/>
    <property type="project" value="InterPro"/>
</dbReference>
<dbReference type="CDD" id="cd06257">
    <property type="entry name" value="DnaJ"/>
    <property type="match status" value="1"/>
</dbReference>
<dbReference type="CDD" id="cd10747">
    <property type="entry name" value="DnaJ_C"/>
    <property type="match status" value="1"/>
</dbReference>
<dbReference type="CDD" id="cd10719">
    <property type="entry name" value="DnaJ_zf"/>
    <property type="match status" value="1"/>
</dbReference>
<dbReference type="FunFam" id="1.10.287.110:FF:000003">
    <property type="entry name" value="Molecular chaperone DnaJ"/>
    <property type="match status" value="1"/>
</dbReference>
<dbReference type="FunFam" id="2.10.230.10:FF:000002">
    <property type="entry name" value="Molecular chaperone DnaJ"/>
    <property type="match status" value="1"/>
</dbReference>
<dbReference type="FunFam" id="2.60.260.20:FF:000004">
    <property type="entry name" value="Molecular chaperone DnaJ"/>
    <property type="match status" value="1"/>
</dbReference>
<dbReference type="Gene3D" id="1.10.287.110">
    <property type="entry name" value="DnaJ domain"/>
    <property type="match status" value="1"/>
</dbReference>
<dbReference type="Gene3D" id="2.10.230.10">
    <property type="entry name" value="Heat shock protein DnaJ, cysteine-rich domain"/>
    <property type="match status" value="1"/>
</dbReference>
<dbReference type="Gene3D" id="2.60.260.20">
    <property type="entry name" value="Urease metallochaperone UreE, N-terminal domain"/>
    <property type="match status" value="2"/>
</dbReference>
<dbReference type="HAMAP" id="MF_01152">
    <property type="entry name" value="DnaJ"/>
    <property type="match status" value="1"/>
</dbReference>
<dbReference type="InterPro" id="IPR012724">
    <property type="entry name" value="DnaJ"/>
</dbReference>
<dbReference type="InterPro" id="IPR002939">
    <property type="entry name" value="DnaJ_C"/>
</dbReference>
<dbReference type="InterPro" id="IPR001623">
    <property type="entry name" value="DnaJ_domain"/>
</dbReference>
<dbReference type="InterPro" id="IPR018253">
    <property type="entry name" value="DnaJ_domain_CS"/>
</dbReference>
<dbReference type="InterPro" id="IPR008971">
    <property type="entry name" value="HSP40/DnaJ_pept-bd"/>
</dbReference>
<dbReference type="InterPro" id="IPR001305">
    <property type="entry name" value="HSP_DnaJ_Cys-rich_dom"/>
</dbReference>
<dbReference type="InterPro" id="IPR036410">
    <property type="entry name" value="HSP_DnaJ_Cys-rich_dom_sf"/>
</dbReference>
<dbReference type="InterPro" id="IPR036869">
    <property type="entry name" value="J_dom_sf"/>
</dbReference>
<dbReference type="NCBIfam" id="TIGR02349">
    <property type="entry name" value="DnaJ_bact"/>
    <property type="match status" value="1"/>
</dbReference>
<dbReference type="NCBIfam" id="NF008035">
    <property type="entry name" value="PRK10767.1"/>
    <property type="match status" value="1"/>
</dbReference>
<dbReference type="PANTHER" id="PTHR43096:SF48">
    <property type="entry name" value="CHAPERONE PROTEIN DNAJ"/>
    <property type="match status" value="1"/>
</dbReference>
<dbReference type="PANTHER" id="PTHR43096">
    <property type="entry name" value="DNAJ HOMOLOG 1, MITOCHONDRIAL-RELATED"/>
    <property type="match status" value="1"/>
</dbReference>
<dbReference type="Pfam" id="PF00226">
    <property type="entry name" value="DnaJ"/>
    <property type="match status" value="1"/>
</dbReference>
<dbReference type="Pfam" id="PF01556">
    <property type="entry name" value="DnaJ_C"/>
    <property type="match status" value="1"/>
</dbReference>
<dbReference type="Pfam" id="PF00684">
    <property type="entry name" value="DnaJ_CXXCXGXG"/>
    <property type="match status" value="1"/>
</dbReference>
<dbReference type="PRINTS" id="PR00625">
    <property type="entry name" value="JDOMAIN"/>
</dbReference>
<dbReference type="SMART" id="SM00271">
    <property type="entry name" value="DnaJ"/>
    <property type="match status" value="1"/>
</dbReference>
<dbReference type="SUPFAM" id="SSF46565">
    <property type="entry name" value="Chaperone J-domain"/>
    <property type="match status" value="1"/>
</dbReference>
<dbReference type="SUPFAM" id="SSF57938">
    <property type="entry name" value="DnaJ/Hsp40 cysteine-rich domain"/>
    <property type="match status" value="1"/>
</dbReference>
<dbReference type="SUPFAM" id="SSF49493">
    <property type="entry name" value="HSP40/DnaJ peptide-binding domain"/>
    <property type="match status" value="2"/>
</dbReference>
<dbReference type="PROSITE" id="PS00636">
    <property type="entry name" value="DNAJ_1"/>
    <property type="match status" value="1"/>
</dbReference>
<dbReference type="PROSITE" id="PS50076">
    <property type="entry name" value="DNAJ_2"/>
    <property type="match status" value="1"/>
</dbReference>
<dbReference type="PROSITE" id="PS51188">
    <property type="entry name" value="ZF_CR"/>
    <property type="match status" value="1"/>
</dbReference>
<reference key="1">
    <citation type="journal article" date="2008" name="BMC Genomics">
        <title>The genome sequence of the fish pathogen Aliivibrio salmonicida strain LFI1238 shows extensive evidence of gene decay.</title>
        <authorList>
            <person name="Hjerde E."/>
            <person name="Lorentzen M.S."/>
            <person name="Holden M.T."/>
            <person name="Seeger K."/>
            <person name="Paulsen S."/>
            <person name="Bason N."/>
            <person name="Churcher C."/>
            <person name="Harris D."/>
            <person name="Norbertczak H."/>
            <person name="Quail M.A."/>
            <person name="Sanders S."/>
            <person name="Thurston S."/>
            <person name="Parkhill J."/>
            <person name="Willassen N.P."/>
            <person name="Thomson N.R."/>
        </authorList>
    </citation>
    <scope>NUCLEOTIDE SEQUENCE [LARGE SCALE GENOMIC DNA]</scope>
    <source>
        <strain>LFI1238</strain>
    </source>
</reference>
<gene>
    <name evidence="1" type="primary">dnaJ</name>
    <name type="ordered locus">VSAL_I2470</name>
</gene>